<gene>
    <name evidence="1" type="primary">pyrH</name>
    <name type="ordered locus">Lreu_0686</name>
</gene>
<protein>
    <recommendedName>
        <fullName evidence="1">Uridylate kinase</fullName>
        <shortName evidence="1">UK</shortName>
        <ecNumber evidence="1">2.7.4.22</ecNumber>
    </recommendedName>
    <alternativeName>
        <fullName evidence="1">Uridine monophosphate kinase</fullName>
        <shortName evidence="1">UMP kinase</shortName>
        <shortName evidence="1">UMPK</shortName>
    </alternativeName>
</protein>
<name>PYRH_LIMRD</name>
<sequence>MADIKYKRVILKLSGEALAGDKGFGINPPVLKDVAKELKEVHDLGVQIAIVVGGGNMWRGVTGAELGMERAQADYIGMLATIMNALSLQDALESIGVPTRVQTSIEMRQIAEPYIRRKAIRHLEKDRIVIFAGGTGSPYFSTDTTAALRAAEINADAILMGKNGVDGVYSADPNKVKDATKFDHLTHMDIIEKNLHVMDTTASSLSMDNHIPLVVFNLNTSGNIMKVVTGQEVGTTIEGD</sequence>
<accession>A5VJC7</accession>
<evidence type="ECO:0000255" key="1">
    <source>
        <dbReference type="HAMAP-Rule" id="MF_01220"/>
    </source>
</evidence>
<feature type="chain" id="PRO_1000066742" description="Uridylate kinase">
    <location>
        <begin position="1"/>
        <end position="240"/>
    </location>
</feature>
<feature type="region of interest" description="Involved in allosteric activation by GTP" evidence="1">
    <location>
        <begin position="20"/>
        <end position="25"/>
    </location>
</feature>
<feature type="binding site" evidence="1">
    <location>
        <begin position="12"/>
        <end position="15"/>
    </location>
    <ligand>
        <name>ATP</name>
        <dbReference type="ChEBI" id="CHEBI:30616"/>
    </ligand>
</feature>
<feature type="binding site" evidence="1">
    <location>
        <position position="54"/>
    </location>
    <ligand>
        <name>UMP</name>
        <dbReference type="ChEBI" id="CHEBI:57865"/>
    </ligand>
</feature>
<feature type="binding site" evidence="1">
    <location>
        <position position="55"/>
    </location>
    <ligand>
        <name>ATP</name>
        <dbReference type="ChEBI" id="CHEBI:30616"/>
    </ligand>
</feature>
<feature type="binding site" evidence="1">
    <location>
        <position position="59"/>
    </location>
    <ligand>
        <name>ATP</name>
        <dbReference type="ChEBI" id="CHEBI:30616"/>
    </ligand>
</feature>
<feature type="binding site" evidence="1">
    <location>
        <position position="74"/>
    </location>
    <ligand>
        <name>UMP</name>
        <dbReference type="ChEBI" id="CHEBI:57865"/>
    </ligand>
</feature>
<feature type="binding site" evidence="1">
    <location>
        <begin position="135"/>
        <end position="142"/>
    </location>
    <ligand>
        <name>UMP</name>
        <dbReference type="ChEBI" id="CHEBI:57865"/>
    </ligand>
</feature>
<feature type="binding site" evidence="1">
    <location>
        <position position="163"/>
    </location>
    <ligand>
        <name>ATP</name>
        <dbReference type="ChEBI" id="CHEBI:30616"/>
    </ligand>
</feature>
<feature type="binding site" evidence="1">
    <location>
        <position position="169"/>
    </location>
    <ligand>
        <name>ATP</name>
        <dbReference type="ChEBI" id="CHEBI:30616"/>
    </ligand>
</feature>
<feature type="binding site" evidence="1">
    <location>
        <position position="172"/>
    </location>
    <ligand>
        <name>ATP</name>
        <dbReference type="ChEBI" id="CHEBI:30616"/>
    </ligand>
</feature>
<proteinExistence type="inferred from homology"/>
<organism>
    <name type="scientific">Limosilactobacillus reuteri (strain DSM 20016)</name>
    <name type="common">Lactobacillus reuteri</name>
    <dbReference type="NCBI Taxonomy" id="557436"/>
    <lineage>
        <taxon>Bacteria</taxon>
        <taxon>Bacillati</taxon>
        <taxon>Bacillota</taxon>
        <taxon>Bacilli</taxon>
        <taxon>Lactobacillales</taxon>
        <taxon>Lactobacillaceae</taxon>
        <taxon>Limosilactobacillus</taxon>
    </lineage>
</organism>
<comment type="function">
    <text evidence="1">Catalyzes the reversible phosphorylation of UMP to UDP.</text>
</comment>
<comment type="catalytic activity">
    <reaction evidence="1">
        <text>UMP + ATP = UDP + ADP</text>
        <dbReference type="Rhea" id="RHEA:24400"/>
        <dbReference type="ChEBI" id="CHEBI:30616"/>
        <dbReference type="ChEBI" id="CHEBI:57865"/>
        <dbReference type="ChEBI" id="CHEBI:58223"/>
        <dbReference type="ChEBI" id="CHEBI:456216"/>
        <dbReference type="EC" id="2.7.4.22"/>
    </reaction>
</comment>
<comment type="activity regulation">
    <text evidence="1">Allosterically activated by GTP. Inhibited by UTP.</text>
</comment>
<comment type="pathway">
    <text evidence="1">Pyrimidine metabolism; CTP biosynthesis via de novo pathway; UDP from UMP (UMPK route): step 1/1.</text>
</comment>
<comment type="subunit">
    <text evidence="1">Homohexamer.</text>
</comment>
<comment type="subcellular location">
    <subcellularLocation>
        <location evidence="1">Cytoplasm</location>
    </subcellularLocation>
</comment>
<comment type="similarity">
    <text evidence="1">Belongs to the UMP kinase family.</text>
</comment>
<dbReference type="EC" id="2.7.4.22" evidence="1"/>
<dbReference type="EMBL" id="CP000705">
    <property type="protein sequence ID" value="ABQ82951.1"/>
    <property type="molecule type" value="Genomic_DNA"/>
</dbReference>
<dbReference type="RefSeq" id="WP_003666862.1">
    <property type="nucleotide sequence ID" value="NZ_AZDD01000002.1"/>
</dbReference>
<dbReference type="SMR" id="A5VJC7"/>
<dbReference type="STRING" id="557436.Lreu_0686"/>
<dbReference type="GeneID" id="77190767"/>
<dbReference type="KEGG" id="lre:Lreu_0686"/>
<dbReference type="eggNOG" id="COG0528">
    <property type="taxonomic scope" value="Bacteria"/>
</dbReference>
<dbReference type="HOGENOM" id="CLU_033861_0_0_9"/>
<dbReference type="UniPathway" id="UPA00159">
    <property type="reaction ID" value="UER00275"/>
</dbReference>
<dbReference type="Proteomes" id="UP000001991">
    <property type="component" value="Chromosome"/>
</dbReference>
<dbReference type="GO" id="GO:0005737">
    <property type="term" value="C:cytoplasm"/>
    <property type="evidence" value="ECO:0007669"/>
    <property type="project" value="UniProtKB-SubCell"/>
</dbReference>
<dbReference type="GO" id="GO:0005524">
    <property type="term" value="F:ATP binding"/>
    <property type="evidence" value="ECO:0007669"/>
    <property type="project" value="UniProtKB-KW"/>
</dbReference>
<dbReference type="GO" id="GO:0033862">
    <property type="term" value="F:UMP kinase activity"/>
    <property type="evidence" value="ECO:0007669"/>
    <property type="project" value="UniProtKB-EC"/>
</dbReference>
<dbReference type="GO" id="GO:0044210">
    <property type="term" value="P:'de novo' CTP biosynthetic process"/>
    <property type="evidence" value="ECO:0007669"/>
    <property type="project" value="UniProtKB-UniRule"/>
</dbReference>
<dbReference type="GO" id="GO:0006225">
    <property type="term" value="P:UDP biosynthetic process"/>
    <property type="evidence" value="ECO:0007669"/>
    <property type="project" value="TreeGrafter"/>
</dbReference>
<dbReference type="CDD" id="cd04254">
    <property type="entry name" value="AAK_UMPK-PyrH-Ec"/>
    <property type="match status" value="1"/>
</dbReference>
<dbReference type="FunFam" id="3.40.1160.10:FF:000001">
    <property type="entry name" value="Uridylate kinase"/>
    <property type="match status" value="1"/>
</dbReference>
<dbReference type="Gene3D" id="3.40.1160.10">
    <property type="entry name" value="Acetylglutamate kinase-like"/>
    <property type="match status" value="1"/>
</dbReference>
<dbReference type="HAMAP" id="MF_01220_B">
    <property type="entry name" value="PyrH_B"/>
    <property type="match status" value="1"/>
</dbReference>
<dbReference type="InterPro" id="IPR036393">
    <property type="entry name" value="AceGlu_kinase-like_sf"/>
</dbReference>
<dbReference type="InterPro" id="IPR001048">
    <property type="entry name" value="Asp/Glu/Uridylate_kinase"/>
</dbReference>
<dbReference type="InterPro" id="IPR011817">
    <property type="entry name" value="Uridylate_kinase"/>
</dbReference>
<dbReference type="InterPro" id="IPR015963">
    <property type="entry name" value="Uridylate_kinase_bac"/>
</dbReference>
<dbReference type="NCBIfam" id="TIGR02075">
    <property type="entry name" value="pyrH_bact"/>
    <property type="match status" value="1"/>
</dbReference>
<dbReference type="PANTHER" id="PTHR42833">
    <property type="entry name" value="URIDYLATE KINASE"/>
    <property type="match status" value="1"/>
</dbReference>
<dbReference type="PANTHER" id="PTHR42833:SF4">
    <property type="entry name" value="URIDYLATE KINASE PUMPKIN, CHLOROPLASTIC"/>
    <property type="match status" value="1"/>
</dbReference>
<dbReference type="Pfam" id="PF00696">
    <property type="entry name" value="AA_kinase"/>
    <property type="match status" value="1"/>
</dbReference>
<dbReference type="PIRSF" id="PIRSF005650">
    <property type="entry name" value="Uridylate_kin"/>
    <property type="match status" value="1"/>
</dbReference>
<dbReference type="SUPFAM" id="SSF53633">
    <property type="entry name" value="Carbamate kinase-like"/>
    <property type="match status" value="1"/>
</dbReference>
<reference key="1">
    <citation type="journal article" date="2011" name="PLoS Genet.">
        <title>The evolution of host specialization in the vertebrate gut symbiont Lactobacillus reuteri.</title>
        <authorList>
            <person name="Frese S.A."/>
            <person name="Benson A.K."/>
            <person name="Tannock G.W."/>
            <person name="Loach D.M."/>
            <person name="Kim J."/>
            <person name="Zhang M."/>
            <person name="Oh P.L."/>
            <person name="Heng N.C."/>
            <person name="Patil P.B."/>
            <person name="Juge N."/>
            <person name="Mackenzie D.A."/>
            <person name="Pearson B.M."/>
            <person name="Lapidus A."/>
            <person name="Dalin E."/>
            <person name="Tice H."/>
            <person name="Goltsman E."/>
            <person name="Land M."/>
            <person name="Hauser L."/>
            <person name="Ivanova N."/>
            <person name="Kyrpides N.C."/>
            <person name="Walter J."/>
        </authorList>
    </citation>
    <scope>NUCLEOTIDE SEQUENCE [LARGE SCALE GENOMIC DNA]</scope>
    <source>
        <strain>DSM 20016</strain>
    </source>
</reference>
<keyword id="KW-0021">Allosteric enzyme</keyword>
<keyword id="KW-0067">ATP-binding</keyword>
<keyword id="KW-0963">Cytoplasm</keyword>
<keyword id="KW-0418">Kinase</keyword>
<keyword id="KW-0547">Nucleotide-binding</keyword>
<keyword id="KW-0665">Pyrimidine biosynthesis</keyword>
<keyword id="KW-1185">Reference proteome</keyword>
<keyword id="KW-0808">Transferase</keyword>